<protein>
    <recommendedName>
        <fullName>Sucrose phosphorylase</fullName>
        <ecNumber>2.4.1.7</ecNumber>
    </recommendedName>
    <alternativeName>
        <fullName>Sucrose glucosyltransferase</fullName>
    </alternativeName>
</protein>
<keyword id="KW-0328">Glycosyltransferase</keyword>
<keyword id="KW-0614">Plasmid</keyword>
<keyword id="KW-0808">Transferase</keyword>
<dbReference type="EC" id="2.4.1.7"/>
<dbReference type="EMBL" id="Z22732">
    <property type="protein sequence ID" value="CAA80424.1"/>
    <property type="molecule type" value="Genomic_DNA"/>
</dbReference>
<dbReference type="EMBL" id="Z22733">
    <property type="protein sequence ID" value="CAA80426.1"/>
    <property type="molecule type" value="Genomic_DNA"/>
</dbReference>
<dbReference type="EMBL" id="Z22734">
    <property type="protein sequence ID" value="CAA80428.1"/>
    <property type="molecule type" value="Genomic_DNA"/>
</dbReference>
<dbReference type="PIR" id="S37466">
    <property type="entry name" value="S37466"/>
</dbReference>
<dbReference type="SMR" id="P33910"/>
<dbReference type="CAZy" id="GH13">
    <property type="family name" value="Glycoside Hydrolase Family 13"/>
</dbReference>
<dbReference type="GO" id="GO:0009018">
    <property type="term" value="F:sucrose phosphorylase activity"/>
    <property type="evidence" value="ECO:0007669"/>
    <property type="project" value="UniProtKB-EC"/>
</dbReference>
<dbReference type="GO" id="GO:0005975">
    <property type="term" value="P:carbohydrate metabolic process"/>
    <property type="evidence" value="ECO:0007669"/>
    <property type="project" value="InterPro"/>
</dbReference>
<dbReference type="CDD" id="cd11355">
    <property type="entry name" value="AmyAc_Sucrose_phosphorylase"/>
    <property type="match status" value="1"/>
</dbReference>
<dbReference type="Gene3D" id="3.20.20.80">
    <property type="entry name" value="Glycosidases"/>
    <property type="match status" value="1"/>
</dbReference>
<dbReference type="Gene3D" id="3.90.400.10">
    <property type="entry name" value="Oligo-1,6-glucosidase, Domain 2"/>
    <property type="match status" value="1"/>
</dbReference>
<dbReference type="InterPro" id="IPR006047">
    <property type="entry name" value="Glyco_hydro_13_cat_dom"/>
</dbReference>
<dbReference type="InterPro" id="IPR017853">
    <property type="entry name" value="Glycoside_hydrolase_SF"/>
</dbReference>
<dbReference type="InterPro" id="IPR045857">
    <property type="entry name" value="O16G_dom_2"/>
</dbReference>
<dbReference type="InterPro" id="IPR016377">
    <property type="entry name" value="Sucrose_GGa_phosphorylase-rel"/>
</dbReference>
<dbReference type="InterPro" id="IPR022527">
    <property type="entry name" value="Sucrose_phospho"/>
</dbReference>
<dbReference type="NCBIfam" id="TIGR03852">
    <property type="entry name" value="sucrose_gtfA"/>
    <property type="match status" value="1"/>
</dbReference>
<dbReference type="PANTHER" id="PTHR38784">
    <property type="entry name" value="SUCROSE PHOSPHORYLASE"/>
    <property type="match status" value="1"/>
</dbReference>
<dbReference type="PANTHER" id="PTHR38784:SF1">
    <property type="entry name" value="SUCROSE PHOSPHORYLASE"/>
    <property type="match status" value="1"/>
</dbReference>
<dbReference type="Pfam" id="PF00128">
    <property type="entry name" value="Alpha-amylase"/>
    <property type="match status" value="1"/>
</dbReference>
<dbReference type="PIRSF" id="PIRSF003059">
    <property type="entry name" value="Sucrose_phosphorylase"/>
    <property type="match status" value="1"/>
</dbReference>
<dbReference type="SMART" id="SM00642">
    <property type="entry name" value="Aamy"/>
    <property type="match status" value="1"/>
</dbReference>
<dbReference type="SUPFAM" id="SSF51445">
    <property type="entry name" value="(Trans)glycosidases"/>
    <property type="match status" value="1"/>
</dbReference>
<proteinExistence type="inferred from homology"/>
<accession>P33910</accession>
<name>SUCP_AGRVI</name>
<comment type="catalytic activity">
    <reaction>
        <text>sucrose + phosphate = D-fructose + alpha-D-glucose 1-phosphate</text>
        <dbReference type="Rhea" id="RHEA:24048"/>
        <dbReference type="ChEBI" id="CHEBI:17992"/>
        <dbReference type="ChEBI" id="CHEBI:37721"/>
        <dbReference type="ChEBI" id="CHEBI:43474"/>
        <dbReference type="ChEBI" id="CHEBI:58601"/>
        <dbReference type="EC" id="2.4.1.7"/>
    </reaction>
</comment>
<comment type="similarity">
    <text evidence="2">Belongs to the glycosyl hydrolase 13 family. Sucrose phosphorylase subfamily.</text>
</comment>
<organism>
    <name type="scientific">Agrobacterium vitis</name>
    <name type="common">Rhizobium vitis</name>
    <dbReference type="NCBI Taxonomy" id="373"/>
    <lineage>
        <taxon>Bacteria</taxon>
        <taxon>Pseudomonadati</taxon>
        <taxon>Pseudomonadota</taxon>
        <taxon>Alphaproteobacteria</taxon>
        <taxon>Hyphomicrobiales</taxon>
        <taxon>Rhizobiaceae</taxon>
        <taxon>Rhizobium/Agrobacterium group</taxon>
        <taxon>Agrobacterium</taxon>
    </lineage>
</organism>
<feature type="chain" id="PRO_0000072298" description="Sucrose phosphorylase">
    <location>
        <begin position="1"/>
        <end position="488"/>
    </location>
</feature>
<feature type="active site" description="Nucleophile" evidence="1">
    <location>
        <position position="193"/>
    </location>
</feature>
<feature type="active site" description="Proton donor" evidence="1">
    <location>
        <position position="233"/>
    </location>
</feature>
<feature type="binding site" evidence="1">
    <location>
        <position position="50"/>
    </location>
    <ligand>
        <name>sucrose</name>
        <dbReference type="ChEBI" id="CHEBI:17992"/>
    </ligand>
</feature>
<feature type="binding site" evidence="1">
    <location>
        <position position="88"/>
    </location>
    <ligand>
        <name>sucrose</name>
        <dbReference type="ChEBI" id="CHEBI:17992"/>
    </ligand>
</feature>
<feature type="binding site" evidence="1">
    <location>
        <begin position="191"/>
        <end position="193"/>
    </location>
    <ligand>
        <name>sucrose</name>
        <dbReference type="ChEBI" id="CHEBI:17992"/>
    </ligand>
</feature>
<feature type="binding site" evidence="1">
    <location>
        <position position="233"/>
    </location>
    <ligand>
        <name>sucrose</name>
        <dbReference type="ChEBI" id="CHEBI:17992"/>
    </ligand>
</feature>
<feature type="binding site" evidence="1">
    <location>
        <begin position="290"/>
        <end position="291"/>
    </location>
    <ligand>
        <name>sucrose</name>
        <dbReference type="ChEBI" id="CHEBI:17992"/>
    </ligand>
</feature>
<feature type="binding site" evidence="1">
    <location>
        <begin position="341"/>
        <end position="344"/>
    </location>
    <ligand>
        <name>sucrose</name>
        <dbReference type="ChEBI" id="CHEBI:17992"/>
    </ligand>
</feature>
<feature type="binding site" evidence="1">
    <location>
        <position position="398"/>
    </location>
    <ligand>
        <name>sucrose</name>
        <dbReference type="ChEBI" id="CHEBI:17992"/>
    </ligand>
</feature>
<geneLocation type="plasmid">
    <name>pTi2608</name>
</geneLocation>
<sequence length="488" mass="53899">MKNSVQLITYVDRLSGGGFPELRALLDGRLQGLFGGVHALPFFNPIDGADAGFDPTDHTIVDPRLGSWDDVRALAGSVEIMADLIVNHVSAQSSWFQDFIAKGSDSEFADMFMTFGKAFPRGASEQDLLNIYRPRLGCRFQRPRLQIGSQRMLWTTFTPQQIDIDVHSAHGALYLETILDRFAEANVTAIRLDAAGYAIKKAGTSCFMIDETYAFLAKLAEKARDRGMEVLVEIHSYYRDQIEIASKVDRVYDFALPPLILHSLFTGDATALARWLEISPHNAITVLDTHDGIGVIDVGAHSDGRPGLLEPQAIDHLVEEIHRRSEGQSRLATGAAASNLDLYQVNCTYYDALGRNDDDYLIARAIQFFAPGIPQVYYVGLLGGINDMELLGKTGVGRDINRHFYEDREIDLALESPLVKRLSDLIRFRNTHPAFNGSFEVATDDTGSLVLSWNLNTEFAQLVVSFSQGKATITASGCYDFTFSGAIA</sequence>
<evidence type="ECO:0000250" key="1">
    <source>
        <dbReference type="UniProtKB" id="A0ZZH6"/>
    </source>
</evidence>
<evidence type="ECO:0000305" key="2"/>
<reference key="1">
    <citation type="journal article" date="1994" name="Mol. Plant Microbe Interact.">
        <title>Natural instability of Agrobacterium vitis Ti plasmid due to unusual duplication of a 2.3-kb DNA fragment.</title>
        <authorList>
            <person name="Fournier P."/>
            <person name="de Ruffray P."/>
            <person name="Otten L."/>
        </authorList>
    </citation>
    <scope>NUCLEOTIDE SEQUENCE [GENOMIC DNA]</scope>
    <source>
        <strain>2608</strain>
    </source>
</reference>